<comment type="subcellular location">
    <subcellularLocation>
        <location evidence="2">Membrane</location>
        <topology evidence="2">Single-pass membrane protein</topology>
    </subcellularLocation>
</comment>
<organism>
    <name type="scientific">Borreliella burgdorferi (strain ATCC 35210 / DSM 4680 / CIP 102532 / B31)</name>
    <name type="common">Borrelia burgdorferi</name>
    <dbReference type="NCBI Taxonomy" id="224326"/>
    <lineage>
        <taxon>Bacteria</taxon>
        <taxon>Pseudomonadati</taxon>
        <taxon>Spirochaetota</taxon>
        <taxon>Spirochaetia</taxon>
        <taxon>Spirochaetales</taxon>
        <taxon>Borreliaceae</taxon>
        <taxon>Borreliella</taxon>
    </lineage>
</organism>
<evidence type="ECO:0000255" key="1"/>
<evidence type="ECO:0000305" key="2"/>
<feature type="chain" id="PRO_0000174372" description="Uncharacterized protein BB_0039">
    <location>
        <begin position="1"/>
        <end position="500"/>
    </location>
</feature>
<feature type="transmembrane region" description="Helical" evidence="1">
    <location>
        <begin position="27"/>
        <end position="47"/>
    </location>
</feature>
<proteinExistence type="predicted"/>
<sequence>MRKRSRKVKNDLVVLESKEKKVGMWGIFALILIVFGFIIAPLLPGIFDNAHSSGLKFGSYKGQPIYYKKDSKFAKYVNYYSNLYSRLQGNAKNINTDYNAWYLAFMKYVEDVAFLDLVKKYNFYISKEMLNKNLLKSPEYLDSSGNFSSKRYNKASDYQKVKIYDDMVENILFSNVKIFLNSNLIFPDSLFDMIKNMSTVERHISYLSLSYQDFSNKEVISYAEKNLNLFKRLSLASIRFKNMNDARTAHDKLLNKTPFEELAKLYSDDIANFKGVVSLDKYYFDLDLNVEKKEDLNSIFSLREGEFSKPIKIKNKNEYQIYKAFSNVHDFDKNSDRDISSVKNYIETYEPSVIEGYLENKLSDFLGDVKFSSLSQVLEKYQLSLKEEIVNLSYNINVYPNTLKELVEFNNSKSFYDIIFGLKENSWSKPFVANKKVYLFFLNSVKKRSNQLKDEIKNEKILDNFNIANSGLITDFLLNKKDFVNNFNESFFALQNFSQN</sequence>
<accession>O51068</accession>
<dbReference type="EMBL" id="AE000783">
    <property type="protein sequence ID" value="AAC66424.1"/>
    <property type="molecule type" value="Genomic_DNA"/>
</dbReference>
<dbReference type="PIR" id="G70104">
    <property type="entry name" value="G70104"/>
</dbReference>
<dbReference type="RefSeq" id="NP_212173.1">
    <property type="nucleotide sequence ID" value="NC_001318.1"/>
</dbReference>
<dbReference type="RefSeq" id="WP_002658333.1">
    <property type="nucleotide sequence ID" value="NC_001318.1"/>
</dbReference>
<dbReference type="STRING" id="224326.BB_0039"/>
<dbReference type="PaxDb" id="224326-BB_0039"/>
<dbReference type="EnsemblBacteria" id="AAC66424">
    <property type="protein sequence ID" value="AAC66424"/>
    <property type="gene ID" value="BB_0039"/>
</dbReference>
<dbReference type="KEGG" id="bbu:BB_0039"/>
<dbReference type="PATRIC" id="fig|224326.49.peg.438"/>
<dbReference type="HOGENOM" id="CLU_041396_0_0_12"/>
<dbReference type="OrthoDB" id="362685at2"/>
<dbReference type="Proteomes" id="UP000001807">
    <property type="component" value="Chromosome"/>
</dbReference>
<dbReference type="GO" id="GO:0016020">
    <property type="term" value="C:membrane"/>
    <property type="evidence" value="ECO:0007669"/>
    <property type="project" value="UniProtKB-SubCell"/>
</dbReference>
<dbReference type="GO" id="GO:0003755">
    <property type="term" value="F:peptidyl-prolyl cis-trans isomerase activity"/>
    <property type="evidence" value="ECO:0007669"/>
    <property type="project" value="InterPro"/>
</dbReference>
<dbReference type="Gene3D" id="3.10.50.40">
    <property type="match status" value="1"/>
</dbReference>
<dbReference type="InterPro" id="IPR046357">
    <property type="entry name" value="PPIase_dom_sf"/>
</dbReference>
<dbReference type="SUPFAM" id="SSF54534">
    <property type="entry name" value="FKBP-like"/>
    <property type="match status" value="1"/>
</dbReference>
<gene>
    <name type="ordered locus">BB_0039</name>
</gene>
<reference key="1">
    <citation type="journal article" date="1997" name="Nature">
        <title>Genomic sequence of a Lyme disease spirochaete, Borrelia burgdorferi.</title>
        <authorList>
            <person name="Fraser C.M."/>
            <person name="Casjens S."/>
            <person name="Huang W.M."/>
            <person name="Sutton G.G."/>
            <person name="Clayton R.A."/>
            <person name="Lathigra R."/>
            <person name="White O."/>
            <person name="Ketchum K.A."/>
            <person name="Dodson R.J."/>
            <person name="Hickey E.K."/>
            <person name="Gwinn M.L."/>
            <person name="Dougherty B.A."/>
            <person name="Tomb J.-F."/>
            <person name="Fleischmann R.D."/>
            <person name="Richardson D.L."/>
            <person name="Peterson J.D."/>
            <person name="Kerlavage A.R."/>
            <person name="Quackenbush J."/>
            <person name="Salzberg S.L."/>
            <person name="Hanson M."/>
            <person name="van Vugt R."/>
            <person name="Palmer N."/>
            <person name="Adams M.D."/>
            <person name="Gocayne J.D."/>
            <person name="Weidman J.F."/>
            <person name="Utterback T.R."/>
            <person name="Watthey L."/>
            <person name="McDonald L.A."/>
            <person name="Artiach P."/>
            <person name="Bowman C."/>
            <person name="Garland S.A."/>
            <person name="Fujii C."/>
            <person name="Cotton M.D."/>
            <person name="Horst K."/>
            <person name="Roberts K.M."/>
            <person name="Hatch B."/>
            <person name="Smith H.O."/>
            <person name="Venter J.C."/>
        </authorList>
    </citation>
    <scope>NUCLEOTIDE SEQUENCE [LARGE SCALE GENOMIC DNA]</scope>
    <source>
        <strain>ATCC 35210 / DSM 4680 / CIP 102532 / B31</strain>
    </source>
</reference>
<keyword id="KW-0472">Membrane</keyword>
<keyword id="KW-1185">Reference proteome</keyword>
<keyword id="KW-0812">Transmembrane</keyword>
<keyword id="KW-1133">Transmembrane helix</keyword>
<protein>
    <recommendedName>
        <fullName>Uncharacterized protein BB_0039</fullName>
    </recommendedName>
</protein>
<name>Y039_BORBU</name>